<sequence>MSDTLLAFDFGTKSIGVAIGQRITGTARPLPAIKAQDGTPDWTLIERLLKEWQPDEIIVGLPLNMDGTEQPLTARARKFANRIHGRFGVTVTLHDERLSTVEARSGLFERGGYRALNKGKVDSASAVIILESYFEQGY</sequence>
<keyword id="KW-0963">Cytoplasm</keyword>
<keyword id="KW-0378">Hydrolase</keyword>
<keyword id="KW-0540">Nuclease</keyword>
<keyword id="KW-0690">Ribosome biogenesis</keyword>
<comment type="function">
    <text evidence="1">Could be a nuclease involved in processing of the 5'-end of pre-16S rRNA.</text>
</comment>
<comment type="subcellular location">
    <subcellularLocation>
        <location evidence="1">Cytoplasm</location>
    </subcellularLocation>
</comment>
<comment type="similarity">
    <text evidence="1">Belongs to the YqgF nuclease family.</text>
</comment>
<proteinExistence type="inferred from homology"/>
<dbReference type="EC" id="3.1.-.-" evidence="1"/>
<dbReference type="EMBL" id="CP000886">
    <property type="protein sequence ID" value="ABX69193.1"/>
    <property type="molecule type" value="Genomic_DNA"/>
</dbReference>
<dbReference type="SMR" id="A9N4P3"/>
<dbReference type="KEGG" id="spq:SPAB_03862"/>
<dbReference type="PATRIC" id="fig|1016998.12.peg.3639"/>
<dbReference type="HOGENOM" id="CLU_098240_3_0_6"/>
<dbReference type="BioCyc" id="SENT1016998:SPAB_RS15695-MONOMER"/>
<dbReference type="Proteomes" id="UP000008556">
    <property type="component" value="Chromosome"/>
</dbReference>
<dbReference type="GO" id="GO:0005829">
    <property type="term" value="C:cytosol"/>
    <property type="evidence" value="ECO:0007669"/>
    <property type="project" value="TreeGrafter"/>
</dbReference>
<dbReference type="GO" id="GO:0004518">
    <property type="term" value="F:nuclease activity"/>
    <property type="evidence" value="ECO:0007669"/>
    <property type="project" value="UniProtKB-KW"/>
</dbReference>
<dbReference type="GO" id="GO:0000967">
    <property type="term" value="P:rRNA 5'-end processing"/>
    <property type="evidence" value="ECO:0007669"/>
    <property type="project" value="UniProtKB-UniRule"/>
</dbReference>
<dbReference type="CDD" id="cd16964">
    <property type="entry name" value="YqgF"/>
    <property type="match status" value="1"/>
</dbReference>
<dbReference type="FunFam" id="3.30.420.140:FF:000002">
    <property type="entry name" value="Putative pre-16S rRNA nuclease"/>
    <property type="match status" value="1"/>
</dbReference>
<dbReference type="Gene3D" id="3.30.420.140">
    <property type="entry name" value="YqgF/RNase H-like domain"/>
    <property type="match status" value="1"/>
</dbReference>
<dbReference type="HAMAP" id="MF_00651">
    <property type="entry name" value="Nuclease_YqgF"/>
    <property type="match status" value="1"/>
</dbReference>
<dbReference type="InterPro" id="IPR012337">
    <property type="entry name" value="RNaseH-like_sf"/>
</dbReference>
<dbReference type="InterPro" id="IPR005227">
    <property type="entry name" value="YqgF"/>
</dbReference>
<dbReference type="InterPro" id="IPR006641">
    <property type="entry name" value="YqgF/RNaseH-like_dom"/>
</dbReference>
<dbReference type="InterPro" id="IPR037027">
    <property type="entry name" value="YqgF/RNaseH-like_dom_sf"/>
</dbReference>
<dbReference type="NCBIfam" id="TIGR00250">
    <property type="entry name" value="RNAse_H_YqgF"/>
    <property type="match status" value="1"/>
</dbReference>
<dbReference type="PANTHER" id="PTHR33317">
    <property type="entry name" value="POLYNUCLEOTIDYL TRANSFERASE, RIBONUCLEASE H-LIKE SUPERFAMILY PROTEIN"/>
    <property type="match status" value="1"/>
</dbReference>
<dbReference type="PANTHER" id="PTHR33317:SF4">
    <property type="entry name" value="POLYNUCLEOTIDYL TRANSFERASE, RIBONUCLEASE H-LIKE SUPERFAMILY PROTEIN"/>
    <property type="match status" value="1"/>
</dbReference>
<dbReference type="Pfam" id="PF03652">
    <property type="entry name" value="RuvX"/>
    <property type="match status" value="1"/>
</dbReference>
<dbReference type="SMART" id="SM00732">
    <property type="entry name" value="YqgFc"/>
    <property type="match status" value="1"/>
</dbReference>
<dbReference type="SUPFAM" id="SSF53098">
    <property type="entry name" value="Ribonuclease H-like"/>
    <property type="match status" value="1"/>
</dbReference>
<protein>
    <recommendedName>
        <fullName evidence="1">Putative pre-16S rRNA nuclease</fullName>
        <ecNumber evidence="1">3.1.-.-</ecNumber>
    </recommendedName>
</protein>
<name>YQGF_SALPB</name>
<gene>
    <name evidence="1" type="primary">yqgF</name>
    <name type="ordered locus">SPAB_03862</name>
</gene>
<accession>A9N4P3</accession>
<organism>
    <name type="scientific">Salmonella paratyphi B (strain ATCC BAA-1250 / SPB7)</name>
    <dbReference type="NCBI Taxonomy" id="1016998"/>
    <lineage>
        <taxon>Bacteria</taxon>
        <taxon>Pseudomonadati</taxon>
        <taxon>Pseudomonadota</taxon>
        <taxon>Gammaproteobacteria</taxon>
        <taxon>Enterobacterales</taxon>
        <taxon>Enterobacteriaceae</taxon>
        <taxon>Salmonella</taxon>
    </lineage>
</organism>
<reference key="1">
    <citation type="submission" date="2007-11" db="EMBL/GenBank/DDBJ databases">
        <authorList>
            <consortium name="The Salmonella enterica serovar Paratyphi B Genome Sequencing Project"/>
            <person name="McClelland M."/>
            <person name="Sanderson E.K."/>
            <person name="Porwollik S."/>
            <person name="Spieth J."/>
            <person name="Clifton W.S."/>
            <person name="Fulton R."/>
            <person name="Cordes M."/>
            <person name="Wollam A."/>
            <person name="Shah N."/>
            <person name="Pepin K."/>
            <person name="Bhonagiri V."/>
            <person name="Nash W."/>
            <person name="Johnson M."/>
            <person name="Thiruvilangam P."/>
            <person name="Wilson R."/>
        </authorList>
    </citation>
    <scope>NUCLEOTIDE SEQUENCE [LARGE SCALE GENOMIC DNA]</scope>
    <source>
        <strain>ATCC BAA-1250 / SPB7</strain>
    </source>
</reference>
<feature type="chain" id="PRO_1000082754" description="Putative pre-16S rRNA nuclease">
    <location>
        <begin position="1"/>
        <end position="138"/>
    </location>
</feature>
<evidence type="ECO:0000255" key="1">
    <source>
        <dbReference type="HAMAP-Rule" id="MF_00651"/>
    </source>
</evidence>